<gene>
    <name type="primary">APOE</name>
</gene>
<protein>
    <recommendedName>
        <fullName>Apolipoprotein E</fullName>
        <shortName>Apo-E</shortName>
    </recommendedName>
</protein>
<name>APOE_CTESO</name>
<sequence>MKVLCTVLVVTLLAGCQADVQPEPEALEPAVRKSDQPWELALGRFWDYLRWVQTLSDQVQEELLSSQVTQELTVLMEDTMKAVKAYKSELEQELVPMAEDTKARLSKELQAAQARLGADMEEVRNRLAQYRSEMQAMLGQSAEELRARLASHLRKLRKKLLRDAEDLQKRLAVYKDGASEGAERSVSAVRERLESLVEQSRARAALTSQPLQERAQAWGKRLRGRLEEVGSQARDRLEEVREQMEEVRVKMEEQAEAFQARLKGWFEPMVEDMRRQWADLIEKVQAAVGASTPTPSQKP</sequence>
<reference key="1">
    <citation type="submission" date="2018-02" db="EMBL/GenBank/DDBJ databases">
        <title>The 200 mammals project: sequencing genomes by a novel cost-effective method, yielding a high resolution annotation of the human genome.</title>
        <authorList>
            <person name="Johnson J."/>
            <person name="Muren E."/>
            <person name="Swofford R."/>
            <person name="Turner-Maier J."/>
            <person name="Marinescu V."/>
            <person name="Genereux D."/>
            <person name="Birren B."/>
            <person name="Karlsson E.K."/>
            <person name="Lindblad-Toh K."/>
        </authorList>
    </citation>
    <scope>NUCLEOTIDE SEQUENCE [LARGE SCALE GENOMIC DNA]</scope>
</reference>
<reference key="2">
    <citation type="unpublished observations" date="2021-07">
        <authorList>
            <person name="Puppione D.L."/>
        </authorList>
    </citation>
    <scope>IDENTIFICATION</scope>
</reference>
<dbReference type="EMBL" id="PVKA01010304">
    <property type="status" value="NOT_ANNOTATED_CDS"/>
    <property type="molecule type" value="Genomic_DNA"/>
</dbReference>
<dbReference type="SMR" id="P0DUY4"/>
<dbReference type="GO" id="GO:0042627">
    <property type="term" value="C:chylomicron"/>
    <property type="evidence" value="ECO:0007669"/>
    <property type="project" value="UniProtKB-KW"/>
</dbReference>
<dbReference type="GO" id="GO:0070062">
    <property type="term" value="C:extracellular exosome"/>
    <property type="evidence" value="ECO:0000250"/>
    <property type="project" value="UniProtKB"/>
</dbReference>
<dbReference type="GO" id="GO:0034364">
    <property type="term" value="C:high-density lipoprotein particle"/>
    <property type="evidence" value="ECO:0007669"/>
    <property type="project" value="UniProtKB-KW"/>
</dbReference>
<dbReference type="GO" id="GO:0034362">
    <property type="term" value="C:low-density lipoprotein particle"/>
    <property type="evidence" value="ECO:0007669"/>
    <property type="project" value="TreeGrafter"/>
</dbReference>
<dbReference type="GO" id="GO:0097487">
    <property type="term" value="C:multivesicular body, internal vesicle"/>
    <property type="evidence" value="ECO:0000250"/>
    <property type="project" value="UniProtKB"/>
</dbReference>
<dbReference type="GO" id="GO:0034361">
    <property type="term" value="C:very-low-density lipoprotein particle"/>
    <property type="evidence" value="ECO:0007669"/>
    <property type="project" value="UniProtKB-KW"/>
</dbReference>
<dbReference type="GO" id="GO:0120020">
    <property type="term" value="F:cholesterol transfer activity"/>
    <property type="evidence" value="ECO:0007669"/>
    <property type="project" value="TreeGrafter"/>
</dbReference>
<dbReference type="GO" id="GO:0008201">
    <property type="term" value="F:heparin binding"/>
    <property type="evidence" value="ECO:0007669"/>
    <property type="project" value="UniProtKB-KW"/>
</dbReference>
<dbReference type="GO" id="GO:0060228">
    <property type="term" value="F:phosphatidylcholine-sterol O-acyltransferase activator activity"/>
    <property type="evidence" value="ECO:0007669"/>
    <property type="project" value="TreeGrafter"/>
</dbReference>
<dbReference type="GO" id="GO:0005543">
    <property type="term" value="F:phospholipid binding"/>
    <property type="evidence" value="ECO:0007669"/>
    <property type="project" value="TreeGrafter"/>
</dbReference>
<dbReference type="GO" id="GO:0055090">
    <property type="term" value="P:acylglycerol homeostasis"/>
    <property type="evidence" value="ECO:0007669"/>
    <property type="project" value="TreeGrafter"/>
</dbReference>
<dbReference type="GO" id="GO:0033344">
    <property type="term" value="P:cholesterol efflux"/>
    <property type="evidence" value="ECO:0007669"/>
    <property type="project" value="TreeGrafter"/>
</dbReference>
<dbReference type="GO" id="GO:0008203">
    <property type="term" value="P:cholesterol metabolic process"/>
    <property type="evidence" value="ECO:0007669"/>
    <property type="project" value="TreeGrafter"/>
</dbReference>
<dbReference type="GO" id="GO:0042157">
    <property type="term" value="P:lipoprotein metabolic process"/>
    <property type="evidence" value="ECO:0007669"/>
    <property type="project" value="InterPro"/>
</dbReference>
<dbReference type="GO" id="GO:0032438">
    <property type="term" value="P:melanosome organization"/>
    <property type="evidence" value="ECO:0000250"/>
    <property type="project" value="UniProtKB"/>
</dbReference>
<dbReference type="GO" id="GO:0033700">
    <property type="term" value="P:phospholipid efflux"/>
    <property type="evidence" value="ECO:0007669"/>
    <property type="project" value="TreeGrafter"/>
</dbReference>
<dbReference type="FunFam" id="1.20.120.20:FF:000002">
    <property type="entry name" value="Apolipoprotein E"/>
    <property type="match status" value="1"/>
</dbReference>
<dbReference type="FunFam" id="1.20.120.20:FF:000003">
    <property type="entry name" value="Apolipoprotein E"/>
    <property type="match status" value="1"/>
</dbReference>
<dbReference type="Gene3D" id="1.20.120.20">
    <property type="entry name" value="Apolipoprotein"/>
    <property type="match status" value="2"/>
</dbReference>
<dbReference type="InterPro" id="IPR000074">
    <property type="entry name" value="ApoA_E"/>
</dbReference>
<dbReference type="InterPro" id="IPR050163">
    <property type="entry name" value="Apolipoprotein_A1/A4/E"/>
</dbReference>
<dbReference type="PANTHER" id="PTHR18976">
    <property type="entry name" value="APOLIPOPROTEIN"/>
    <property type="match status" value="1"/>
</dbReference>
<dbReference type="PANTHER" id="PTHR18976:SF2">
    <property type="entry name" value="APOLIPOPROTEIN E"/>
    <property type="match status" value="1"/>
</dbReference>
<dbReference type="Pfam" id="PF01442">
    <property type="entry name" value="Apolipoprotein"/>
    <property type="match status" value="1"/>
</dbReference>
<dbReference type="SUPFAM" id="SSF58113">
    <property type="entry name" value="Apolipoprotein A-I"/>
    <property type="match status" value="1"/>
</dbReference>
<evidence type="ECO:0000250" key="1">
    <source>
        <dbReference type="UniProtKB" id="P02649"/>
    </source>
</evidence>
<evidence type="ECO:0000250" key="2">
    <source>
        <dbReference type="UniProtKB" id="P08226"/>
    </source>
</evidence>
<evidence type="ECO:0000255" key="3"/>
<evidence type="ECO:0000305" key="4"/>
<feature type="signal peptide" evidence="3">
    <location>
        <begin position="1"/>
        <end position="18"/>
    </location>
</feature>
<feature type="chain" id="PRO_0000454008" description="Apolipoprotein E">
    <location>
        <begin position="19"/>
        <end position="299"/>
    </location>
</feature>
<feature type="repeat" description="1">
    <location>
        <begin position="75"/>
        <end position="95"/>
    </location>
</feature>
<feature type="repeat" description="2">
    <location>
        <begin position="96"/>
        <end position="117"/>
    </location>
</feature>
<feature type="repeat" description="3">
    <location>
        <begin position="118"/>
        <end position="139"/>
    </location>
</feature>
<feature type="repeat" description="4">
    <location>
        <begin position="140"/>
        <end position="161"/>
    </location>
</feature>
<feature type="repeat" description="5">
    <location>
        <begin position="162"/>
        <end position="183"/>
    </location>
</feature>
<feature type="repeat" description="6">
    <location>
        <begin position="184"/>
        <end position="206"/>
    </location>
</feature>
<feature type="repeat" description="7">
    <location>
        <begin position="207"/>
        <end position="225"/>
    </location>
</feature>
<feature type="repeat" description="8">
    <location>
        <begin position="224"/>
        <end position="242"/>
    </location>
</feature>
<feature type="region of interest" description="8 X 22 AA approximate tandem repeats">
    <location>
        <begin position="74"/>
        <end position="245"/>
    </location>
</feature>
<feature type="region of interest" description="LDL and other lipoprotein receptors binding" evidence="1">
    <location>
        <begin position="152"/>
        <end position="162"/>
    </location>
</feature>
<feature type="region of interest" description="Lipid-binding and lipoprotein association" evidence="1">
    <location>
        <begin position="205"/>
        <end position="273"/>
    </location>
</feature>
<feature type="region of interest" description="Specificity for association with VLDL" evidence="1">
    <location>
        <begin position="261"/>
        <end position="273"/>
    </location>
</feature>
<feature type="binding site" evidence="1">
    <location>
        <begin position="156"/>
        <end position="159"/>
    </location>
    <ligand>
        <name>heparin</name>
        <dbReference type="ChEBI" id="CHEBI:28304"/>
    </ligand>
</feature>
<feature type="binding site" evidence="1">
    <location>
        <begin position="219"/>
        <end position="226"/>
    </location>
    <ligand>
        <name>heparin</name>
        <dbReference type="ChEBI" id="CHEBI:28304"/>
    </ligand>
</feature>
<feature type="modified residue" description="Methionine sulfoxide" evidence="2">
    <location>
        <position position="137"/>
    </location>
</feature>
<feature type="modified residue" description="Phosphoserine" evidence="1">
    <location>
        <position position="141"/>
    </location>
</feature>
<proteinExistence type="inferred from homology"/>
<comment type="function">
    <text evidence="1">APOE is an apolipoprotein, a protein associating with lipid particles, that mainly functions in lipoprotein-mediated lipid transport between organs via the plasma and interstitial fluids. APOE is a core component of plasma lipoproteins and is involved in their production, conversion and clearance. Apolipoproteins are amphipathic molecules that interact both with lipids of the lipoprotein particle core and the aqueous environment of the plasma. As such, APOE associates with chylomicrons, chylomicron remnants, very low density lipoproteins (VLDL) and intermediate density lipoproteins (IDL) but shows a preferential binding to high-density lipoproteins (HDL). It also binds a wide range of cellular receptors including the LDL receptor/LDLR, the LDL receptor-related proteins LRP1, LRP2 and LRP8 and the very low-density lipoprotein receptor/VLDLR that mediate the cellular uptake of the APOE-containing lipoprotein particles. Finally, APOE also has a heparin-binding activity and binds heparan-sulfate proteoglycans on the surface of cells, a property that supports the capture and the receptor-mediated uptake of APOE-containing lipoproteins by cells. A main function of APOE is to mediate lipoprotein clearance through the uptake of chylomicrons, VLDLs, and HDLs by hepatocytes. APOE is also involved in the biosynthesis by the liver of VLDLs as well as their uptake by peripheral tissues ensuring the delivery of triglycerides and energy storage in muscle, heart and adipose tissues. By participating in the lipoprotein-mediated distribution of lipids among tissues, APOE plays a critical role in plasma and tissues lipid homeostasis. APOE is also involved in two steps of reverse cholesterol transport, the HDLs-mediated transport of cholesterol from peripheral tissues to the liver, and thereby plays an important role in cholesterol homeostasis. First, it is functionally associated with ABCA1 in the biogenesis of HDLs in tissues. Second, it is enriched in circulating HDLs and mediates their uptake by hepatocytes. APOE also plays an important role in lipid transport in the central nervous system, regulating neuron survival and sprouting.</text>
</comment>
<comment type="subunit">
    <text evidence="1">Homotetramer. May interact with ABCA1; functionally associated with ABCA1 in the biogenesis of HDLs. May interact with APP/A4 amyloid-beta peptide; the interaction is extremely stable in vitro but its physiological significance is unclear. May interact with MAPT. May interact with MAP2. In the cerebrospinal fluid, interacts with secreted SORL1. Interacts with PMEL; this allows the loading of PMEL luminal fragment on ILVs to induce fibril nucleation.</text>
</comment>
<comment type="subcellular location">
    <subcellularLocation>
        <location evidence="1">Secreted</location>
    </subcellularLocation>
    <subcellularLocation>
        <location evidence="1">Secreted</location>
        <location evidence="1">Extracellular space</location>
    </subcellularLocation>
    <subcellularLocation>
        <location evidence="1">Secreted</location>
        <location evidence="1">Extracellular space</location>
        <location evidence="1">Extracellular matrix</location>
    </subcellularLocation>
    <subcellularLocation>
        <location evidence="1">Extracellular vesicle</location>
    </subcellularLocation>
    <subcellularLocation>
        <location evidence="1">Endosome</location>
        <location evidence="1">Multivesicular body</location>
    </subcellularLocation>
    <text evidence="1">In the plasma, APOE is associated with chylomicrons, chylomicrons remnants, VLDL, LDL and HDL lipoproteins. Lipid poor oligomeric APOE is associated with the extracellular matrix in a calcium- and heparan-sulfate proteoglycans-dependent manner. Lipidation induces the release from the extracellular matrix. Colocalizes with CD63 and PMEL at exosomes and in intraluminal vesicles within multivesicular endosomes.</text>
</comment>
<comment type="PTM">
    <text evidence="1">APOE exists as multiple glycosylated and sialylated glycoforms within cells and in plasma. The extent of glycosylation and sialylation are tissue and context specific.</text>
</comment>
<comment type="PTM">
    <text evidence="1">Glycated in plasma VLDL.</text>
</comment>
<comment type="PTM">
    <text evidence="1">Phosphorylated by FAM20C in the extracellular medium.</text>
</comment>
<comment type="similarity">
    <text evidence="4">Belongs to the apolipoprotein A1/A4/E family.</text>
</comment>
<accession>P0DUY4</accession>
<keyword id="KW-0162">Chylomicron</keyword>
<keyword id="KW-0967">Endosome</keyword>
<keyword id="KW-0272">Extracellular matrix</keyword>
<keyword id="KW-0325">Glycoprotein</keyword>
<keyword id="KW-0345">HDL</keyword>
<keyword id="KW-0358">Heparin-binding</keyword>
<keyword id="KW-0445">Lipid transport</keyword>
<keyword id="KW-0446">Lipid-binding</keyword>
<keyword id="KW-0558">Oxidation</keyword>
<keyword id="KW-0597">Phosphoprotein</keyword>
<keyword id="KW-0677">Repeat</keyword>
<keyword id="KW-0964">Secreted</keyword>
<keyword id="KW-0732">Signal</keyword>
<keyword id="KW-0813">Transport</keyword>
<keyword id="KW-0850">VLDL</keyword>
<organism>
    <name type="scientific">Ctenomys sociabilis</name>
    <name type="common">Social tuco-tuco</name>
    <dbReference type="NCBI Taxonomy" id="43321"/>
    <lineage>
        <taxon>Eukaryota</taxon>
        <taxon>Metazoa</taxon>
        <taxon>Chordata</taxon>
        <taxon>Craniata</taxon>
        <taxon>Vertebrata</taxon>
        <taxon>Euteleostomi</taxon>
        <taxon>Mammalia</taxon>
        <taxon>Eutheria</taxon>
        <taxon>Euarchontoglires</taxon>
        <taxon>Glires</taxon>
        <taxon>Rodentia</taxon>
        <taxon>Hystricomorpha</taxon>
        <taxon>Ctenomyidae</taxon>
        <taxon>Ctenomys</taxon>
    </lineage>
</organism>